<organism>
    <name type="scientific">Mus musculus</name>
    <name type="common">Mouse</name>
    <dbReference type="NCBI Taxonomy" id="10090"/>
    <lineage>
        <taxon>Eukaryota</taxon>
        <taxon>Metazoa</taxon>
        <taxon>Chordata</taxon>
        <taxon>Craniata</taxon>
        <taxon>Vertebrata</taxon>
        <taxon>Euteleostomi</taxon>
        <taxon>Mammalia</taxon>
        <taxon>Eutheria</taxon>
        <taxon>Euarchontoglires</taxon>
        <taxon>Glires</taxon>
        <taxon>Rodentia</taxon>
        <taxon>Myomorpha</taxon>
        <taxon>Muroidea</taxon>
        <taxon>Muridae</taxon>
        <taxon>Murinae</taxon>
        <taxon>Mus</taxon>
        <taxon>Mus</taxon>
    </lineage>
</organism>
<proteinExistence type="evidence at protein level"/>
<comment type="function">
    <text evidence="1">Acts as a regulator of programmed cell death, mediating both autophagy and apoptosis.</text>
</comment>
<comment type="subcellular location">
    <subcellularLocation>
        <location evidence="1">Endoplasmic reticulum membrane</location>
        <topology evidence="1">Single-pass membrane protein</topology>
    </subcellularLocation>
    <subcellularLocation>
        <location evidence="1">Lysosome membrane</location>
        <topology evidence="1">Single-pass membrane protein</topology>
    </subcellularLocation>
</comment>
<comment type="similarity">
    <text evidence="5">Belongs to the EVA1 family.</text>
</comment>
<reference key="1">
    <citation type="journal article" date="2005" name="Science">
        <title>The transcriptional landscape of the mammalian genome.</title>
        <authorList>
            <person name="Carninci P."/>
            <person name="Kasukawa T."/>
            <person name="Katayama S."/>
            <person name="Gough J."/>
            <person name="Frith M.C."/>
            <person name="Maeda N."/>
            <person name="Oyama R."/>
            <person name="Ravasi T."/>
            <person name="Lenhard B."/>
            <person name="Wells C."/>
            <person name="Kodzius R."/>
            <person name="Shimokawa K."/>
            <person name="Bajic V.B."/>
            <person name="Brenner S.E."/>
            <person name="Batalov S."/>
            <person name="Forrest A.R."/>
            <person name="Zavolan M."/>
            <person name="Davis M.J."/>
            <person name="Wilming L.G."/>
            <person name="Aidinis V."/>
            <person name="Allen J.E."/>
            <person name="Ambesi-Impiombato A."/>
            <person name="Apweiler R."/>
            <person name="Aturaliya R.N."/>
            <person name="Bailey T.L."/>
            <person name="Bansal M."/>
            <person name="Baxter L."/>
            <person name="Beisel K.W."/>
            <person name="Bersano T."/>
            <person name="Bono H."/>
            <person name="Chalk A.M."/>
            <person name="Chiu K.P."/>
            <person name="Choudhary V."/>
            <person name="Christoffels A."/>
            <person name="Clutterbuck D.R."/>
            <person name="Crowe M.L."/>
            <person name="Dalla E."/>
            <person name="Dalrymple B.P."/>
            <person name="de Bono B."/>
            <person name="Della Gatta G."/>
            <person name="di Bernardo D."/>
            <person name="Down T."/>
            <person name="Engstrom P."/>
            <person name="Fagiolini M."/>
            <person name="Faulkner G."/>
            <person name="Fletcher C.F."/>
            <person name="Fukushima T."/>
            <person name="Furuno M."/>
            <person name="Futaki S."/>
            <person name="Gariboldi M."/>
            <person name="Georgii-Hemming P."/>
            <person name="Gingeras T.R."/>
            <person name="Gojobori T."/>
            <person name="Green R.E."/>
            <person name="Gustincich S."/>
            <person name="Harbers M."/>
            <person name="Hayashi Y."/>
            <person name="Hensch T.K."/>
            <person name="Hirokawa N."/>
            <person name="Hill D."/>
            <person name="Huminiecki L."/>
            <person name="Iacono M."/>
            <person name="Ikeo K."/>
            <person name="Iwama A."/>
            <person name="Ishikawa T."/>
            <person name="Jakt M."/>
            <person name="Kanapin A."/>
            <person name="Katoh M."/>
            <person name="Kawasawa Y."/>
            <person name="Kelso J."/>
            <person name="Kitamura H."/>
            <person name="Kitano H."/>
            <person name="Kollias G."/>
            <person name="Krishnan S.P."/>
            <person name="Kruger A."/>
            <person name="Kummerfeld S.K."/>
            <person name="Kurochkin I.V."/>
            <person name="Lareau L.F."/>
            <person name="Lazarevic D."/>
            <person name="Lipovich L."/>
            <person name="Liu J."/>
            <person name="Liuni S."/>
            <person name="McWilliam S."/>
            <person name="Madan Babu M."/>
            <person name="Madera M."/>
            <person name="Marchionni L."/>
            <person name="Matsuda H."/>
            <person name="Matsuzawa S."/>
            <person name="Miki H."/>
            <person name="Mignone F."/>
            <person name="Miyake S."/>
            <person name="Morris K."/>
            <person name="Mottagui-Tabar S."/>
            <person name="Mulder N."/>
            <person name="Nakano N."/>
            <person name="Nakauchi H."/>
            <person name="Ng P."/>
            <person name="Nilsson R."/>
            <person name="Nishiguchi S."/>
            <person name="Nishikawa S."/>
            <person name="Nori F."/>
            <person name="Ohara O."/>
            <person name="Okazaki Y."/>
            <person name="Orlando V."/>
            <person name="Pang K.C."/>
            <person name="Pavan W.J."/>
            <person name="Pavesi G."/>
            <person name="Pesole G."/>
            <person name="Petrovsky N."/>
            <person name="Piazza S."/>
            <person name="Reed J."/>
            <person name="Reid J.F."/>
            <person name="Ring B.Z."/>
            <person name="Ringwald M."/>
            <person name="Rost B."/>
            <person name="Ruan Y."/>
            <person name="Salzberg S.L."/>
            <person name="Sandelin A."/>
            <person name="Schneider C."/>
            <person name="Schoenbach C."/>
            <person name="Sekiguchi K."/>
            <person name="Semple C.A."/>
            <person name="Seno S."/>
            <person name="Sessa L."/>
            <person name="Sheng Y."/>
            <person name="Shibata Y."/>
            <person name="Shimada H."/>
            <person name="Shimada K."/>
            <person name="Silva D."/>
            <person name="Sinclair B."/>
            <person name="Sperling S."/>
            <person name="Stupka E."/>
            <person name="Sugiura K."/>
            <person name="Sultana R."/>
            <person name="Takenaka Y."/>
            <person name="Taki K."/>
            <person name="Tammoja K."/>
            <person name="Tan S.L."/>
            <person name="Tang S."/>
            <person name="Taylor M.S."/>
            <person name="Tegner J."/>
            <person name="Teichmann S.A."/>
            <person name="Ueda H.R."/>
            <person name="van Nimwegen E."/>
            <person name="Verardo R."/>
            <person name="Wei C.L."/>
            <person name="Yagi K."/>
            <person name="Yamanishi H."/>
            <person name="Zabarovsky E."/>
            <person name="Zhu S."/>
            <person name="Zimmer A."/>
            <person name="Hide W."/>
            <person name="Bult C."/>
            <person name="Grimmond S.M."/>
            <person name="Teasdale R.D."/>
            <person name="Liu E.T."/>
            <person name="Brusic V."/>
            <person name="Quackenbush J."/>
            <person name="Wahlestedt C."/>
            <person name="Mattick J.S."/>
            <person name="Hume D.A."/>
            <person name="Kai C."/>
            <person name="Sasaki D."/>
            <person name="Tomaru Y."/>
            <person name="Fukuda S."/>
            <person name="Kanamori-Katayama M."/>
            <person name="Suzuki M."/>
            <person name="Aoki J."/>
            <person name="Arakawa T."/>
            <person name="Iida J."/>
            <person name="Imamura K."/>
            <person name="Itoh M."/>
            <person name="Kato T."/>
            <person name="Kawaji H."/>
            <person name="Kawagashira N."/>
            <person name="Kawashima T."/>
            <person name="Kojima M."/>
            <person name="Kondo S."/>
            <person name="Konno H."/>
            <person name="Nakano K."/>
            <person name="Ninomiya N."/>
            <person name="Nishio T."/>
            <person name="Okada M."/>
            <person name="Plessy C."/>
            <person name="Shibata K."/>
            <person name="Shiraki T."/>
            <person name="Suzuki S."/>
            <person name="Tagami M."/>
            <person name="Waki K."/>
            <person name="Watahiki A."/>
            <person name="Okamura-Oho Y."/>
            <person name="Suzuki H."/>
            <person name="Kawai J."/>
            <person name="Hayashizaki Y."/>
        </authorList>
    </citation>
    <scope>NUCLEOTIDE SEQUENCE [LARGE SCALE MRNA]</scope>
    <source>
        <tissue>Mammary gland</tissue>
    </source>
</reference>
<reference key="2">
    <citation type="journal article" date="2009" name="PLoS Biol.">
        <title>Lineage-specific biology revealed by a finished genome assembly of the mouse.</title>
        <authorList>
            <person name="Church D.M."/>
            <person name="Goodstadt L."/>
            <person name="Hillier L.W."/>
            <person name="Zody M.C."/>
            <person name="Goldstein S."/>
            <person name="She X."/>
            <person name="Bult C.J."/>
            <person name="Agarwala R."/>
            <person name="Cherry J.L."/>
            <person name="DiCuccio M."/>
            <person name="Hlavina W."/>
            <person name="Kapustin Y."/>
            <person name="Meric P."/>
            <person name="Maglott D."/>
            <person name="Birtle Z."/>
            <person name="Marques A.C."/>
            <person name="Graves T."/>
            <person name="Zhou S."/>
            <person name="Teague B."/>
            <person name="Potamousis K."/>
            <person name="Churas C."/>
            <person name="Place M."/>
            <person name="Herschleb J."/>
            <person name="Runnheim R."/>
            <person name="Forrest D."/>
            <person name="Amos-Landgraf J."/>
            <person name="Schwartz D.C."/>
            <person name="Cheng Z."/>
            <person name="Lindblad-Toh K."/>
            <person name="Eichler E.E."/>
            <person name="Ponting C.P."/>
        </authorList>
    </citation>
    <scope>NUCLEOTIDE SEQUENCE [LARGE SCALE GENOMIC DNA]</scope>
    <source>
        <strain>C57BL/6J</strain>
    </source>
</reference>
<reference key="3">
    <citation type="submission" date="2005-07" db="EMBL/GenBank/DDBJ databases">
        <authorList>
            <person name="Mural R.J."/>
            <person name="Adams M.D."/>
            <person name="Myers E.W."/>
            <person name="Smith H.O."/>
            <person name="Venter J.C."/>
        </authorList>
    </citation>
    <scope>NUCLEOTIDE SEQUENCE [LARGE SCALE GENOMIC DNA]</scope>
</reference>
<reference key="4">
    <citation type="journal article" date="2004" name="Genome Res.">
        <title>The status, quality, and expansion of the NIH full-length cDNA project: the Mammalian Gene Collection (MGC).</title>
        <authorList>
            <consortium name="The MGC Project Team"/>
        </authorList>
    </citation>
    <scope>NUCLEOTIDE SEQUENCE [LARGE SCALE MRNA]</scope>
    <source>
        <strain>FVB/N</strain>
        <tissue>Kidney</tissue>
        <tissue>Mammary tumor</tissue>
    </source>
</reference>
<reference key="5">
    <citation type="journal article" date="2007" name="Proc. Natl. Acad. Sci. U.S.A.">
        <title>Large-scale phosphorylation analysis of mouse liver.</title>
        <authorList>
            <person name="Villen J."/>
            <person name="Beausoleil S.A."/>
            <person name="Gerber S.A."/>
            <person name="Gygi S.P."/>
        </authorList>
    </citation>
    <scope>PHOSPHORYLATION [LARGE SCALE ANALYSIS] AT THR-110</scope>
    <scope>IDENTIFICATION BY MASS SPECTROMETRY [LARGE SCALE ANALYSIS]</scope>
    <source>
        <tissue>Liver</tissue>
    </source>
</reference>
<feature type="chain" id="PRO_0000278672" description="Protein eva-1 homolog A">
    <location>
        <begin position="1"/>
        <end position="156"/>
    </location>
</feature>
<feature type="transmembrane region" description="Helical" evidence="3">
    <location>
        <begin position="40"/>
        <end position="60"/>
    </location>
</feature>
<feature type="region of interest" description="Disordered" evidence="4">
    <location>
        <begin position="79"/>
        <end position="100"/>
    </location>
</feature>
<feature type="compositionally biased region" description="Acidic residues" evidence="4">
    <location>
        <begin position="84"/>
        <end position="96"/>
    </location>
</feature>
<feature type="modified residue" description="Phosphothreonine" evidence="6">
    <location>
        <position position="110"/>
    </location>
</feature>
<feature type="modified residue" description="Phosphoserine" evidence="2">
    <location>
        <position position="118"/>
    </location>
</feature>
<feature type="sequence conflict" description="In Ref. 1; BAE26256 and 4; AAH14699/AAH27150." evidence="5" ref="1 4">
    <original>I</original>
    <variation>L</variation>
    <location>
        <position position="25"/>
    </location>
</feature>
<name>EVA1A_MOUSE</name>
<evidence type="ECO:0000250" key="1"/>
<evidence type="ECO:0000250" key="2">
    <source>
        <dbReference type="UniProtKB" id="Q9H8M9"/>
    </source>
</evidence>
<evidence type="ECO:0000255" key="3"/>
<evidence type="ECO:0000256" key="4">
    <source>
        <dbReference type="SAM" id="MobiDB-lite"/>
    </source>
</evidence>
<evidence type="ECO:0000305" key="5"/>
<evidence type="ECO:0007744" key="6">
    <source>
    </source>
</evidence>
<gene>
    <name type="primary">Eva1a</name>
    <name type="synonym">Fam176a</name>
    <name type="synonym">Tmem166</name>
</gene>
<keyword id="KW-0053">Apoptosis</keyword>
<keyword id="KW-0072">Autophagy</keyword>
<keyword id="KW-0256">Endoplasmic reticulum</keyword>
<keyword id="KW-0458">Lysosome</keyword>
<keyword id="KW-0472">Membrane</keyword>
<keyword id="KW-0597">Phosphoprotein</keyword>
<keyword id="KW-1185">Reference proteome</keyword>
<keyword id="KW-0812">Transmembrane</keyword>
<keyword id="KW-1133">Transmembrane helix</keyword>
<protein>
    <recommendedName>
        <fullName>Protein eva-1 homolog A</fullName>
    </recommendedName>
    <alternativeName>
        <fullName>Protein FAM176A</fullName>
    </alternativeName>
    <alternativeName>
        <fullName>Transmembrane protein 166</fullName>
    </alternativeName>
</protein>
<sequence>MKLPLSPSTEPVATEPLGMALLSSILAAWSYISENPERAALYFVSGVCIGLFLTLAALVMRISCHTDCRRGPRRRCLQDRECSDSSDSEDGSEDTASDLSVRRHRRFERTLNKNVFTSAEELERAQRLEERERIIREIWMNGQPEVPGTRSLNRYY</sequence>
<dbReference type="EMBL" id="AK145140">
    <property type="protein sequence ID" value="BAE26256.1"/>
    <property type="molecule type" value="mRNA"/>
</dbReference>
<dbReference type="EMBL" id="AC171502">
    <property type="status" value="NOT_ANNOTATED_CDS"/>
    <property type="molecule type" value="Genomic_DNA"/>
</dbReference>
<dbReference type="EMBL" id="CH466523">
    <property type="protein sequence ID" value="EDK99032.1"/>
    <property type="molecule type" value="Genomic_DNA"/>
</dbReference>
<dbReference type="EMBL" id="BC014699">
    <property type="protein sequence ID" value="AAH14699.1"/>
    <property type="molecule type" value="mRNA"/>
</dbReference>
<dbReference type="EMBL" id="BC027150">
    <property type="protein sequence ID" value="AAH27150.1"/>
    <property type="molecule type" value="mRNA"/>
</dbReference>
<dbReference type="CCDS" id="CCDS20261.1"/>
<dbReference type="RefSeq" id="NP_001398521.1">
    <property type="nucleotide sequence ID" value="NM_001411592.1"/>
</dbReference>
<dbReference type="RefSeq" id="NP_001398522.1">
    <property type="nucleotide sequence ID" value="NM_001411593.1"/>
</dbReference>
<dbReference type="RefSeq" id="NP_001398523.1">
    <property type="nucleotide sequence ID" value="NM_001411594.1"/>
</dbReference>
<dbReference type="RefSeq" id="NP_001398524.1">
    <property type="nucleotide sequence ID" value="NM_001411595.1"/>
</dbReference>
<dbReference type="RefSeq" id="NP_663545.2">
    <property type="nucleotide sequence ID" value="NM_145570.3"/>
</dbReference>
<dbReference type="RefSeq" id="XP_006506025.1">
    <property type="nucleotide sequence ID" value="XM_006505962.1"/>
</dbReference>
<dbReference type="FunCoup" id="Q91WM6">
    <property type="interactions" value="495"/>
</dbReference>
<dbReference type="STRING" id="10090.ENSMUSP00000037422"/>
<dbReference type="iPTMnet" id="Q91WM6"/>
<dbReference type="PhosphoSitePlus" id="Q91WM6"/>
<dbReference type="SwissPalm" id="Q91WM6"/>
<dbReference type="jPOST" id="Q91WM6"/>
<dbReference type="PaxDb" id="10090-ENSMUSP00000037422"/>
<dbReference type="ProteomicsDB" id="271505"/>
<dbReference type="Antibodypedia" id="2359">
    <property type="antibodies" value="138 antibodies from 22 providers"/>
</dbReference>
<dbReference type="DNASU" id="232146"/>
<dbReference type="Ensembl" id="ENSMUST00000042974.15">
    <property type="protein sequence ID" value="ENSMUSP00000037422.9"/>
    <property type="gene ID" value="ENSMUSG00000035104.15"/>
</dbReference>
<dbReference type="GeneID" id="232146"/>
<dbReference type="KEGG" id="mmu:232146"/>
<dbReference type="UCSC" id="uc009clg.2">
    <property type="organism name" value="mouse"/>
</dbReference>
<dbReference type="AGR" id="MGI:2385247"/>
<dbReference type="CTD" id="84141"/>
<dbReference type="MGI" id="MGI:2385247">
    <property type="gene designation" value="Eva1a"/>
</dbReference>
<dbReference type="VEuPathDB" id="HostDB:ENSMUSG00000035104"/>
<dbReference type="eggNOG" id="ENOG502S091">
    <property type="taxonomic scope" value="Eukaryota"/>
</dbReference>
<dbReference type="GeneTree" id="ENSGT00940000154096"/>
<dbReference type="InParanoid" id="Q91WM6"/>
<dbReference type="OMA" id="VMKISCH"/>
<dbReference type="OrthoDB" id="5970528at2759"/>
<dbReference type="PhylomeDB" id="Q91WM6"/>
<dbReference type="TreeFam" id="TF352986"/>
<dbReference type="BioGRID-ORCS" id="232146">
    <property type="hits" value="2 hits in 80 CRISPR screens"/>
</dbReference>
<dbReference type="ChiTaRS" id="Eva1a">
    <property type="organism name" value="mouse"/>
</dbReference>
<dbReference type="PRO" id="PR:Q91WM6"/>
<dbReference type="Proteomes" id="UP000000589">
    <property type="component" value="Chromosome 6"/>
</dbReference>
<dbReference type="RNAct" id="Q91WM6">
    <property type="molecule type" value="protein"/>
</dbReference>
<dbReference type="Bgee" id="ENSMUSG00000035104">
    <property type="expression patterns" value="Expressed in left lobe of liver and 201 other cell types or tissues"/>
</dbReference>
<dbReference type="ExpressionAtlas" id="Q91WM6">
    <property type="expression patterns" value="baseline and differential"/>
</dbReference>
<dbReference type="GO" id="GO:0005789">
    <property type="term" value="C:endoplasmic reticulum membrane"/>
    <property type="evidence" value="ECO:0007669"/>
    <property type="project" value="UniProtKB-SubCell"/>
</dbReference>
<dbReference type="GO" id="GO:0005765">
    <property type="term" value="C:lysosomal membrane"/>
    <property type="evidence" value="ECO:0007669"/>
    <property type="project" value="UniProtKB-SubCell"/>
</dbReference>
<dbReference type="GO" id="GO:0005886">
    <property type="term" value="C:plasma membrane"/>
    <property type="evidence" value="ECO:0007669"/>
    <property type="project" value="Ensembl"/>
</dbReference>
<dbReference type="GO" id="GO:0006915">
    <property type="term" value="P:apoptotic process"/>
    <property type="evidence" value="ECO:0000315"/>
    <property type="project" value="MGI"/>
</dbReference>
<dbReference type="GO" id="GO:0006914">
    <property type="term" value="P:autophagy"/>
    <property type="evidence" value="ECO:0000315"/>
    <property type="project" value="MGI"/>
</dbReference>
<dbReference type="GO" id="GO:0003214">
    <property type="term" value="P:cardiac left ventricle morphogenesis"/>
    <property type="evidence" value="ECO:0000315"/>
    <property type="project" value="MGI"/>
</dbReference>
<dbReference type="GO" id="GO:0097709">
    <property type="term" value="P:connective tissue replacement"/>
    <property type="evidence" value="ECO:0000315"/>
    <property type="project" value="MGI"/>
</dbReference>
<dbReference type="GO" id="GO:0006112">
    <property type="term" value="P:energy reserve metabolic process"/>
    <property type="evidence" value="ECO:0000315"/>
    <property type="project" value="MGI"/>
</dbReference>
<dbReference type="GO" id="GO:0007507">
    <property type="term" value="P:heart development"/>
    <property type="evidence" value="ECO:0000315"/>
    <property type="project" value="MGI"/>
</dbReference>
<dbReference type="GO" id="GO:0030324">
    <property type="term" value="P:lung development"/>
    <property type="evidence" value="ECO:0000315"/>
    <property type="project" value="MGI"/>
</dbReference>
<dbReference type="GO" id="GO:0009791">
    <property type="term" value="P:post-embryonic development"/>
    <property type="evidence" value="ECO:0000315"/>
    <property type="project" value="MGI"/>
</dbReference>
<dbReference type="GO" id="GO:0031929">
    <property type="term" value="P:TOR signaling"/>
    <property type="evidence" value="ECO:0000315"/>
    <property type="project" value="MGI"/>
</dbReference>
<dbReference type="InterPro" id="IPR052461">
    <property type="entry name" value="EVA1_A/B"/>
</dbReference>
<dbReference type="InterPro" id="IPR039500">
    <property type="entry name" value="EVA1_dom"/>
</dbReference>
<dbReference type="PANTHER" id="PTHR48422:SF1">
    <property type="entry name" value="PROTEIN EVA-1 HOMOLOG A"/>
    <property type="match status" value="1"/>
</dbReference>
<dbReference type="PANTHER" id="PTHR48422">
    <property type="entry name" value="PROTEIN EVA-1 HOMOLOG B-RELATED"/>
    <property type="match status" value="1"/>
</dbReference>
<dbReference type="Pfam" id="PF14851">
    <property type="entry name" value="FAM176"/>
    <property type="match status" value="1"/>
</dbReference>
<accession>Q91WM6</accession>
<accession>G3X936</accession>